<keyword id="KW-0479">Metal-binding</keyword>
<keyword id="KW-0496">Mitochondrion</keyword>
<keyword id="KW-0539">Nucleus</keyword>
<keyword id="KW-1185">Reference proteome</keyword>
<keyword id="KW-0862">Zinc</keyword>
<keyword id="KW-0863">Zinc-finger</keyword>
<accession>O60117</accession>
<reference key="1">
    <citation type="journal article" date="2002" name="Nature">
        <title>The genome sequence of Schizosaccharomyces pombe.</title>
        <authorList>
            <person name="Wood V."/>
            <person name="Gwilliam R."/>
            <person name="Rajandream M.A."/>
            <person name="Lyne M.H."/>
            <person name="Lyne R."/>
            <person name="Stewart A."/>
            <person name="Sgouros J.G."/>
            <person name="Peat N."/>
            <person name="Hayles J."/>
            <person name="Baker S.G."/>
            <person name="Basham D."/>
            <person name="Bowman S."/>
            <person name="Brooks K."/>
            <person name="Brown D."/>
            <person name="Brown S."/>
            <person name="Chillingworth T."/>
            <person name="Churcher C.M."/>
            <person name="Collins M."/>
            <person name="Connor R."/>
            <person name="Cronin A."/>
            <person name="Davis P."/>
            <person name="Feltwell T."/>
            <person name="Fraser A."/>
            <person name="Gentles S."/>
            <person name="Goble A."/>
            <person name="Hamlin N."/>
            <person name="Harris D.E."/>
            <person name="Hidalgo J."/>
            <person name="Hodgson G."/>
            <person name="Holroyd S."/>
            <person name="Hornsby T."/>
            <person name="Howarth S."/>
            <person name="Huckle E.J."/>
            <person name="Hunt S."/>
            <person name="Jagels K."/>
            <person name="James K.D."/>
            <person name="Jones L."/>
            <person name="Jones M."/>
            <person name="Leather S."/>
            <person name="McDonald S."/>
            <person name="McLean J."/>
            <person name="Mooney P."/>
            <person name="Moule S."/>
            <person name="Mungall K.L."/>
            <person name="Murphy L.D."/>
            <person name="Niblett D."/>
            <person name="Odell C."/>
            <person name="Oliver K."/>
            <person name="O'Neil S."/>
            <person name="Pearson D."/>
            <person name="Quail M.A."/>
            <person name="Rabbinowitsch E."/>
            <person name="Rutherford K.M."/>
            <person name="Rutter S."/>
            <person name="Saunders D."/>
            <person name="Seeger K."/>
            <person name="Sharp S."/>
            <person name="Skelton J."/>
            <person name="Simmonds M.N."/>
            <person name="Squares R."/>
            <person name="Squares S."/>
            <person name="Stevens K."/>
            <person name="Taylor K."/>
            <person name="Taylor R.G."/>
            <person name="Tivey A."/>
            <person name="Walsh S.V."/>
            <person name="Warren T."/>
            <person name="Whitehead S."/>
            <person name="Woodward J.R."/>
            <person name="Volckaert G."/>
            <person name="Aert R."/>
            <person name="Robben J."/>
            <person name="Grymonprez B."/>
            <person name="Weltjens I."/>
            <person name="Vanstreels E."/>
            <person name="Rieger M."/>
            <person name="Schaefer M."/>
            <person name="Mueller-Auer S."/>
            <person name="Gabel C."/>
            <person name="Fuchs M."/>
            <person name="Duesterhoeft A."/>
            <person name="Fritzc C."/>
            <person name="Holzer E."/>
            <person name="Moestl D."/>
            <person name="Hilbert H."/>
            <person name="Borzym K."/>
            <person name="Langer I."/>
            <person name="Beck A."/>
            <person name="Lehrach H."/>
            <person name="Reinhardt R."/>
            <person name="Pohl T.M."/>
            <person name="Eger P."/>
            <person name="Zimmermann W."/>
            <person name="Wedler H."/>
            <person name="Wambutt R."/>
            <person name="Purnelle B."/>
            <person name="Goffeau A."/>
            <person name="Cadieu E."/>
            <person name="Dreano S."/>
            <person name="Gloux S."/>
            <person name="Lelaure V."/>
            <person name="Mottier S."/>
            <person name="Galibert F."/>
            <person name="Aves S.J."/>
            <person name="Xiang Z."/>
            <person name="Hunt C."/>
            <person name="Moore K."/>
            <person name="Hurst S.M."/>
            <person name="Lucas M."/>
            <person name="Rochet M."/>
            <person name="Gaillardin C."/>
            <person name="Tallada V.A."/>
            <person name="Garzon A."/>
            <person name="Thode G."/>
            <person name="Daga R.R."/>
            <person name="Cruzado L."/>
            <person name="Jimenez J."/>
            <person name="Sanchez M."/>
            <person name="del Rey F."/>
            <person name="Benito J."/>
            <person name="Dominguez A."/>
            <person name="Revuelta J.L."/>
            <person name="Moreno S."/>
            <person name="Armstrong J."/>
            <person name="Forsburg S.L."/>
            <person name="Cerutti L."/>
            <person name="Lowe T."/>
            <person name="McCombie W.R."/>
            <person name="Paulsen I."/>
            <person name="Potashkin J."/>
            <person name="Shpakovski G.V."/>
            <person name="Ussery D."/>
            <person name="Barrell B.G."/>
            <person name="Nurse P."/>
        </authorList>
    </citation>
    <scope>NUCLEOTIDE SEQUENCE [LARGE SCALE GENOMIC DNA]</scope>
    <source>
        <strain>972 / ATCC 24843</strain>
    </source>
</reference>
<reference key="2">
    <citation type="journal article" date="2006" name="Nat. Biotechnol.">
        <title>ORFeome cloning and global analysis of protein localization in the fission yeast Schizosaccharomyces pombe.</title>
        <authorList>
            <person name="Matsuyama A."/>
            <person name="Arai R."/>
            <person name="Yashiroda Y."/>
            <person name="Shirai A."/>
            <person name="Kamata A."/>
            <person name="Sekido S."/>
            <person name="Kobayashi Y."/>
            <person name="Hashimoto A."/>
            <person name="Hamamoto M."/>
            <person name="Hiraoka Y."/>
            <person name="Horinouchi S."/>
            <person name="Yoshida M."/>
        </authorList>
    </citation>
    <scope>SUBCELLULAR LOCATION [LARGE SCALE ANALYSIS]</scope>
</reference>
<proteinExistence type="predicted"/>
<sequence>MKKQFLVRKNSSNSRYLRRDCVICLQKDGLRAQLSPCGHDQFDYSCICRWMDQSLTCPICKRHVDCVFYGFHGSSLYKKWYTQSLGSNQYSISRQLLRQPSFSSSENTDRLADLLRVRRFIYQKAWKSYENPSLSSHRQYQIPTPIQLASSASLLKKVESFIAKELLLFEYLDGHQINFIQIFLMGLLRVQNIQHPQTIDELAEFIGHEESSILLHELQRYLQFRPLSISSYLYSKRYLYGPEGLTMVQLLSQIENIQHESGPETENS</sequence>
<organism>
    <name type="scientific">Schizosaccharomyces pombe (strain 972 / ATCC 24843)</name>
    <name type="common">Fission yeast</name>
    <dbReference type="NCBI Taxonomy" id="284812"/>
    <lineage>
        <taxon>Eukaryota</taxon>
        <taxon>Fungi</taxon>
        <taxon>Dikarya</taxon>
        <taxon>Ascomycota</taxon>
        <taxon>Taphrinomycotina</taxon>
        <taxon>Schizosaccharomycetes</taxon>
        <taxon>Schizosaccharomycetales</taxon>
        <taxon>Schizosaccharomycetaceae</taxon>
        <taxon>Schizosaccharomyces</taxon>
    </lineage>
</organism>
<name>YH73_SCHPO</name>
<gene>
    <name type="ORF">SPBC16G5.03</name>
</gene>
<evidence type="ECO:0000255" key="1">
    <source>
        <dbReference type="PROSITE-ProRule" id="PRU00175"/>
    </source>
</evidence>
<evidence type="ECO:0000269" key="2">
    <source>
    </source>
</evidence>
<comment type="subcellular location">
    <subcellularLocation>
        <location evidence="2">Mitochondrion</location>
    </subcellularLocation>
    <subcellularLocation>
        <location evidence="2">Nucleus</location>
    </subcellularLocation>
</comment>
<feature type="chain" id="PRO_0000310485" description="Uncharacterized RING finger protein C16G5.03">
    <location>
        <begin position="1"/>
        <end position="268"/>
    </location>
</feature>
<feature type="zinc finger region" description="RING-type; degenerate" evidence="1">
    <location>
        <begin position="21"/>
        <end position="61"/>
    </location>
</feature>
<dbReference type="EMBL" id="CU329671">
    <property type="protein sequence ID" value="CAA19023.1"/>
    <property type="molecule type" value="Genomic_DNA"/>
</dbReference>
<dbReference type="PIR" id="T39595">
    <property type="entry name" value="T39595"/>
</dbReference>
<dbReference type="SMR" id="O60117"/>
<dbReference type="BioGRID" id="276542">
    <property type="interactions" value="14"/>
</dbReference>
<dbReference type="STRING" id="284812.O60117"/>
<dbReference type="SwissPalm" id="O60117"/>
<dbReference type="PaxDb" id="4896-SPBC16G5.03.1"/>
<dbReference type="EnsemblFungi" id="SPBC16G5.03.1">
    <property type="protein sequence ID" value="SPBC16G5.03.1:pep"/>
    <property type="gene ID" value="SPBC16G5.03"/>
</dbReference>
<dbReference type="KEGG" id="spo:2539998"/>
<dbReference type="PomBase" id="SPBC16G5.03"/>
<dbReference type="VEuPathDB" id="FungiDB:SPBC16G5.03"/>
<dbReference type="eggNOG" id="KOG0800">
    <property type="taxonomic scope" value="Eukaryota"/>
</dbReference>
<dbReference type="HOGENOM" id="CLU_970311_0_0_1"/>
<dbReference type="InParanoid" id="O60117"/>
<dbReference type="OMA" id="YECIRQW"/>
<dbReference type="PhylomeDB" id="O60117"/>
<dbReference type="PRO" id="PR:O60117"/>
<dbReference type="Proteomes" id="UP000002485">
    <property type="component" value="Chromosome II"/>
</dbReference>
<dbReference type="GO" id="GO:0005741">
    <property type="term" value="C:mitochondrial outer membrane"/>
    <property type="evidence" value="ECO:0000314"/>
    <property type="project" value="PomBase"/>
</dbReference>
<dbReference type="GO" id="GO:0005634">
    <property type="term" value="C:nucleus"/>
    <property type="evidence" value="ECO:0000314"/>
    <property type="project" value="PomBase"/>
</dbReference>
<dbReference type="GO" id="GO:0061665">
    <property type="term" value="F:SUMO ligase activity"/>
    <property type="evidence" value="ECO:0000250"/>
    <property type="project" value="PomBase"/>
</dbReference>
<dbReference type="GO" id="GO:0061630">
    <property type="term" value="F:ubiquitin protein ligase activity"/>
    <property type="evidence" value="ECO:0000250"/>
    <property type="project" value="PomBase"/>
</dbReference>
<dbReference type="GO" id="GO:0008270">
    <property type="term" value="F:zinc ion binding"/>
    <property type="evidence" value="ECO:0000255"/>
    <property type="project" value="PomBase"/>
</dbReference>
<dbReference type="GO" id="GO:0043161">
    <property type="term" value="P:proteasome-mediated ubiquitin-dependent protein catabolic process"/>
    <property type="evidence" value="ECO:0000250"/>
    <property type="project" value="PomBase"/>
</dbReference>
<dbReference type="Gene3D" id="3.30.40.10">
    <property type="entry name" value="Zinc/RING finger domain, C3HC4 (zinc finger)"/>
    <property type="match status" value="1"/>
</dbReference>
<dbReference type="InterPro" id="IPR001841">
    <property type="entry name" value="Znf_RING"/>
</dbReference>
<dbReference type="InterPro" id="IPR013083">
    <property type="entry name" value="Znf_RING/FYVE/PHD"/>
</dbReference>
<dbReference type="Pfam" id="PF13639">
    <property type="entry name" value="zf-RING_2"/>
    <property type="match status" value="1"/>
</dbReference>
<dbReference type="SMART" id="SM00184">
    <property type="entry name" value="RING"/>
    <property type="match status" value="1"/>
</dbReference>
<dbReference type="SUPFAM" id="SSF57850">
    <property type="entry name" value="RING/U-box"/>
    <property type="match status" value="1"/>
</dbReference>
<dbReference type="PROSITE" id="PS50089">
    <property type="entry name" value="ZF_RING_2"/>
    <property type="match status" value="1"/>
</dbReference>
<protein>
    <recommendedName>
        <fullName>Uncharacterized RING finger protein C16G5.03</fullName>
    </recommendedName>
</protein>